<proteinExistence type="inferred from homology"/>
<protein>
    <recommendedName>
        <fullName>Transcriptional regulator MraZ</fullName>
    </recommendedName>
</protein>
<sequence>MFRGATLVNLDSKGRLSVPTRYREQLLENAAGQMVCTIDIHHPCLLLYPLPEWEIIEQKLSRLSSMNPVERRVQRLLLGHASECQMDGAGRLLIAPVLRQHAGLTKEVMLVGQFNKFELWDETTWHQQVKEDIDAEQLATGDLSERLQDLSL</sequence>
<keyword id="KW-0963">Cytoplasm</keyword>
<keyword id="KW-0238">DNA-binding</keyword>
<keyword id="KW-0677">Repeat</keyword>
<keyword id="KW-0678">Repressor</keyword>
<keyword id="KW-0804">Transcription</keyword>
<keyword id="KW-0805">Transcription regulation</keyword>
<accession>B6HZ58</accession>
<comment type="function">
    <text evidence="1">Negatively regulates its own expression and that of the subsequent genes in the proximal part of the division and cell wall (dcw) gene cluster. Acts by binding directly to DNA. May also regulate the expression of genes outside the dcw cluster.</text>
</comment>
<comment type="subunit">
    <text evidence="1">Forms oligomers.</text>
</comment>
<comment type="subcellular location">
    <subcellularLocation>
        <location evidence="1">Cytoplasm</location>
        <location evidence="1">Nucleoid</location>
    </subcellularLocation>
</comment>
<comment type="similarity">
    <text evidence="1">Belongs to the MraZ family.</text>
</comment>
<reference key="1">
    <citation type="journal article" date="2008" name="DNA Res.">
        <title>Complete genome sequence and comparative analysis of the wild-type commensal Escherichia coli strain SE11 isolated from a healthy adult.</title>
        <authorList>
            <person name="Oshima K."/>
            <person name="Toh H."/>
            <person name="Ogura Y."/>
            <person name="Sasamoto H."/>
            <person name="Morita H."/>
            <person name="Park S.-H."/>
            <person name="Ooka T."/>
            <person name="Iyoda S."/>
            <person name="Taylor T.D."/>
            <person name="Hayashi T."/>
            <person name="Itoh K."/>
            <person name="Hattori M."/>
        </authorList>
    </citation>
    <scope>NUCLEOTIDE SEQUENCE [LARGE SCALE GENOMIC DNA]</scope>
    <source>
        <strain>SE11</strain>
    </source>
</reference>
<gene>
    <name evidence="1" type="primary">mraZ</name>
    <name type="ordered locus">ECSE_0083</name>
</gene>
<dbReference type="EMBL" id="AP009240">
    <property type="protein sequence ID" value="BAG75607.1"/>
    <property type="molecule type" value="Genomic_DNA"/>
</dbReference>
<dbReference type="RefSeq" id="WP_001295770.1">
    <property type="nucleotide sequence ID" value="NC_011415.1"/>
</dbReference>
<dbReference type="SMR" id="B6HZ58"/>
<dbReference type="GeneID" id="75202102"/>
<dbReference type="KEGG" id="ecy:ECSE_0083"/>
<dbReference type="HOGENOM" id="CLU_107907_2_0_6"/>
<dbReference type="Proteomes" id="UP000008199">
    <property type="component" value="Chromosome"/>
</dbReference>
<dbReference type="GO" id="GO:0005737">
    <property type="term" value="C:cytoplasm"/>
    <property type="evidence" value="ECO:0007669"/>
    <property type="project" value="UniProtKB-UniRule"/>
</dbReference>
<dbReference type="GO" id="GO:0009295">
    <property type="term" value="C:nucleoid"/>
    <property type="evidence" value="ECO:0007669"/>
    <property type="project" value="UniProtKB-SubCell"/>
</dbReference>
<dbReference type="GO" id="GO:0003700">
    <property type="term" value="F:DNA-binding transcription factor activity"/>
    <property type="evidence" value="ECO:0007669"/>
    <property type="project" value="UniProtKB-UniRule"/>
</dbReference>
<dbReference type="GO" id="GO:0000976">
    <property type="term" value="F:transcription cis-regulatory region binding"/>
    <property type="evidence" value="ECO:0007669"/>
    <property type="project" value="TreeGrafter"/>
</dbReference>
<dbReference type="GO" id="GO:2000143">
    <property type="term" value="P:negative regulation of DNA-templated transcription initiation"/>
    <property type="evidence" value="ECO:0007669"/>
    <property type="project" value="TreeGrafter"/>
</dbReference>
<dbReference type="CDD" id="cd16321">
    <property type="entry name" value="MraZ_C"/>
    <property type="match status" value="1"/>
</dbReference>
<dbReference type="CDD" id="cd16320">
    <property type="entry name" value="MraZ_N"/>
    <property type="match status" value="1"/>
</dbReference>
<dbReference type="FunFam" id="3.40.1550.20:FF:000001">
    <property type="entry name" value="Transcriptional regulator MraZ"/>
    <property type="match status" value="1"/>
</dbReference>
<dbReference type="Gene3D" id="3.40.1550.20">
    <property type="entry name" value="Transcriptional regulator MraZ domain"/>
    <property type="match status" value="1"/>
</dbReference>
<dbReference type="HAMAP" id="MF_01008">
    <property type="entry name" value="MraZ"/>
    <property type="match status" value="1"/>
</dbReference>
<dbReference type="InterPro" id="IPR003444">
    <property type="entry name" value="MraZ"/>
</dbReference>
<dbReference type="InterPro" id="IPR035644">
    <property type="entry name" value="MraZ_C"/>
</dbReference>
<dbReference type="InterPro" id="IPR020603">
    <property type="entry name" value="MraZ_dom"/>
</dbReference>
<dbReference type="InterPro" id="IPR035642">
    <property type="entry name" value="MraZ_N"/>
</dbReference>
<dbReference type="InterPro" id="IPR038619">
    <property type="entry name" value="MraZ_sf"/>
</dbReference>
<dbReference type="InterPro" id="IPR007159">
    <property type="entry name" value="SpoVT-AbrB_dom"/>
</dbReference>
<dbReference type="InterPro" id="IPR037914">
    <property type="entry name" value="SpoVT-AbrB_sf"/>
</dbReference>
<dbReference type="NCBIfam" id="TIGR00242">
    <property type="entry name" value="division/cell wall cluster transcriptional repressor MraZ"/>
    <property type="match status" value="1"/>
</dbReference>
<dbReference type="PANTHER" id="PTHR34701">
    <property type="entry name" value="TRANSCRIPTIONAL REGULATOR MRAZ"/>
    <property type="match status" value="1"/>
</dbReference>
<dbReference type="PANTHER" id="PTHR34701:SF1">
    <property type="entry name" value="TRANSCRIPTIONAL REGULATOR MRAZ"/>
    <property type="match status" value="1"/>
</dbReference>
<dbReference type="Pfam" id="PF02381">
    <property type="entry name" value="MraZ"/>
    <property type="match status" value="2"/>
</dbReference>
<dbReference type="SUPFAM" id="SSF89447">
    <property type="entry name" value="AbrB/MazE/MraZ-like"/>
    <property type="match status" value="1"/>
</dbReference>
<dbReference type="PROSITE" id="PS51740">
    <property type="entry name" value="SPOVT_ABRB"/>
    <property type="match status" value="2"/>
</dbReference>
<organism>
    <name type="scientific">Escherichia coli (strain SE11)</name>
    <dbReference type="NCBI Taxonomy" id="409438"/>
    <lineage>
        <taxon>Bacteria</taxon>
        <taxon>Pseudomonadati</taxon>
        <taxon>Pseudomonadota</taxon>
        <taxon>Gammaproteobacteria</taxon>
        <taxon>Enterobacterales</taxon>
        <taxon>Enterobacteriaceae</taxon>
        <taxon>Escherichia</taxon>
    </lineage>
</organism>
<name>MRAZ_ECOSE</name>
<feature type="chain" id="PRO_1000134795" description="Transcriptional regulator MraZ">
    <location>
        <begin position="1"/>
        <end position="152"/>
    </location>
</feature>
<feature type="domain" description="SpoVT-AbrB 1" evidence="2">
    <location>
        <begin position="5"/>
        <end position="52"/>
    </location>
</feature>
<feature type="domain" description="SpoVT-AbrB 2" evidence="2">
    <location>
        <begin position="81"/>
        <end position="124"/>
    </location>
</feature>
<evidence type="ECO:0000255" key="1">
    <source>
        <dbReference type="HAMAP-Rule" id="MF_01008"/>
    </source>
</evidence>
<evidence type="ECO:0000255" key="2">
    <source>
        <dbReference type="PROSITE-ProRule" id="PRU01076"/>
    </source>
</evidence>